<keyword id="KW-0106">Calcium</keyword>
<keyword id="KW-0325">Glycoprotein</keyword>
<keyword id="KW-0378">Hydrolase</keyword>
<keyword id="KW-0472">Membrane</keyword>
<keyword id="KW-0645">Protease</keyword>
<keyword id="KW-1185">Reference proteome</keyword>
<keyword id="KW-0720">Serine protease</keyword>
<keyword id="KW-0732">Signal</keyword>
<keyword id="KW-0812">Transmembrane</keyword>
<keyword id="KW-1133">Transmembrane helix</keyword>
<keyword id="KW-0865">Zymogen</keyword>
<evidence type="ECO:0000255" key="1"/>
<evidence type="ECO:0000255" key="2">
    <source>
        <dbReference type="PROSITE-ProRule" id="PRU01173"/>
    </source>
</evidence>
<evidence type="ECO:0000255" key="3">
    <source>
        <dbReference type="PROSITE-ProRule" id="PRU01240"/>
    </source>
</evidence>
<evidence type="ECO:0000256" key="4">
    <source>
        <dbReference type="SAM" id="MobiDB-lite"/>
    </source>
</evidence>
<evidence type="ECO:0000305" key="5"/>
<feature type="signal peptide" evidence="1">
    <location>
        <begin position="1"/>
        <end position="17"/>
    </location>
</feature>
<feature type="chain" id="PRO_0000027201" description="Dibasic-processing endoprotease">
    <location>
        <begin position="18"/>
        <end position="976"/>
    </location>
</feature>
<feature type="transmembrane region" description="Helical" evidence="1">
    <location>
        <begin position="524"/>
        <end position="544"/>
    </location>
</feature>
<feature type="transmembrane region" description="Helical" evidence="1">
    <location>
        <begin position="855"/>
        <end position="875"/>
    </location>
</feature>
<feature type="domain" description="Peptidase S8" evidence="3">
    <location>
        <begin position="277"/>
        <end position="595"/>
    </location>
</feature>
<feature type="domain" description="P/Homo B" evidence="2">
    <location>
        <begin position="604"/>
        <end position="737"/>
    </location>
</feature>
<feature type="region of interest" description="Disordered" evidence="4">
    <location>
        <begin position="172"/>
        <end position="246"/>
    </location>
</feature>
<feature type="region of interest" description="Disordered" evidence="4">
    <location>
        <begin position="733"/>
        <end position="848"/>
    </location>
</feature>
<feature type="region of interest" description="Disordered" evidence="4">
    <location>
        <begin position="914"/>
        <end position="976"/>
    </location>
</feature>
<feature type="compositionally biased region" description="Basic and acidic residues" evidence="4">
    <location>
        <begin position="172"/>
        <end position="212"/>
    </location>
</feature>
<feature type="compositionally biased region" description="Acidic residues" evidence="4">
    <location>
        <begin position="213"/>
        <end position="231"/>
    </location>
</feature>
<feature type="compositionally biased region" description="Basic and acidic residues" evidence="4">
    <location>
        <begin position="734"/>
        <end position="830"/>
    </location>
</feature>
<feature type="compositionally biased region" description="Basic and acidic residues" evidence="4">
    <location>
        <begin position="915"/>
        <end position="928"/>
    </location>
</feature>
<feature type="compositionally biased region" description="Basic and acidic residues" evidence="4">
    <location>
        <begin position="940"/>
        <end position="976"/>
    </location>
</feature>
<feature type="active site" description="Charge relay system" evidence="3">
    <location>
        <position position="311"/>
    </location>
</feature>
<feature type="active site" description="Charge relay system" evidence="3">
    <location>
        <position position="349"/>
    </location>
</feature>
<feature type="active site" description="Charge relay system" evidence="3">
    <location>
        <position position="528"/>
    </location>
</feature>
<feature type="glycosylation site" description="N-linked (GlcNAc...) asparagine" evidence="1">
    <location>
        <position position="156"/>
    </location>
</feature>
<feature type="glycosylation site" description="N-linked (GlcNAc...) asparagine" evidence="1">
    <location>
        <position position="291"/>
    </location>
</feature>
<feature type="glycosylation site" description="N-linked (GlcNAc...) asparagine" evidence="1">
    <location>
        <position position="299"/>
    </location>
</feature>
<feature type="glycosylation site" description="N-linked (GlcNAc...) asparagine" evidence="1">
    <location>
        <position position="336"/>
    </location>
</feature>
<feature type="glycosylation site" description="N-linked (GlcNAc...) asparagine" evidence="1">
    <location>
        <position position="606"/>
    </location>
</feature>
<feature type="glycosylation site" description="N-linked (GlcNAc...) asparagine" evidence="1">
    <location>
        <position position="886"/>
    </location>
</feature>
<comment type="subcellular location">
    <subcellularLocation>
        <location evidence="5">Membrane</location>
        <topology evidence="5">Multi-pass membrane protein</topology>
    </subcellularLocation>
</comment>
<comment type="similarity">
    <text evidence="5">Belongs to the peptidase S8 family. Furin subfamily.</text>
</comment>
<sequence length="976" mass="110024">MLRKFILGLLLASQAVAQLPHKERDYDSRVYVALSLRDGLDPREFEASVSGLDHGQWTFEHPVGTIPNTYVFSAPKEYAPIENIRDQDRLEVAGGVLAKRELRKREKLQKKYGMSEEDVEKRLVALERLDYDWSERGLGSLEVLSERRIHKRAPVNWTEEEMEYLKEIKRRAEEAQKAQDDKGDKKEDQKDDKKEGQEAQKEGDKEDNKGDDKEDGEEDDDDDEDEDDDDASPAMPVQWKPVDESMYGGMPDDSLYDVYRKYYPDEVGIKDPSLWKQWYLHNVHKAGHDLNVTGLWLRNVTGWGVVTAVVDDGLDMNAEDIKANYFAEGSWDFNFNKSDPKPSSHDDYHGTRCAGEIAAVRNNVCGVGVAYDSKVAGIRILSKEIAEDIEALAINYEMDKNDIYSCSWGPPDNGQTMARPGKVVKDAMVNAITNGRQGKGNVFVFASGNGGSRGDNCNFDGYTNSIYSITVGALDFNDGHPYYSEACSANMVVTYSSGSEHYIVGTDINAIDDKSAAPRCQNQHGGTSAAAPLAAGVFALALSVRPDLTWRDMQYLALYSAVEINSNDDGWQDTASGQRFHHQFGYGKLDASKIVELAEGWNLVNNQTSFHSEVKTVSQKVKYNEPLKSVITVTRDDLDKVNFKRAEHITAVLNLEASYRGHVRVLLKGPRGVVSELAALRRDDRSKDGYDNWAFMSVAHWADEGEGDWELTVENTGEQDQVELVNWQLNVFGEQKDKREENKEGESKPEDENKEGEKEGEKKPEDENKEEGNKEDDKGDQKEDKPEDKPEDKPEDTPEDKPEDKPEDAPEDKPSDEKKPEEKPEEKPVDNSDSSSDSSDSHTSWWPDLSSKKSAWLYGAVLLVGGFIAVIGIYACVTRRNRVRRNRSKDAPSASSFEFDLIPHDDSDDDFVYPEDTHRRSGDNDRLYDPFAEVEDDDDMFRISDEGEDAHDVEPELNRVSMEADKRDNDRQNLLG</sequence>
<accession>P42781</accession>
<reference key="1">
    <citation type="journal article" date="1994" name="Yeast">
        <title>Cloning, nucleotide sequence and functions of XPR6, which codes for a dibasic processing endoprotease from the yeast Yarrowia lipolytica.</title>
        <authorList>
            <person name="Enderlin C.S."/>
            <person name="Ogrydziak D.M."/>
        </authorList>
    </citation>
    <scope>NUCLEOTIDE SEQUENCE [GENOMIC DNA]</scope>
    <source>
        <strain>ATCC 32338 / CX-161-1B</strain>
    </source>
</reference>
<reference key="2">
    <citation type="journal article" date="2004" name="Nature">
        <title>Genome evolution in yeasts.</title>
        <authorList>
            <person name="Dujon B."/>
            <person name="Sherman D."/>
            <person name="Fischer G."/>
            <person name="Durrens P."/>
            <person name="Casaregola S."/>
            <person name="Lafontaine I."/>
            <person name="de Montigny J."/>
            <person name="Marck C."/>
            <person name="Neuveglise C."/>
            <person name="Talla E."/>
            <person name="Goffard N."/>
            <person name="Frangeul L."/>
            <person name="Aigle M."/>
            <person name="Anthouard V."/>
            <person name="Babour A."/>
            <person name="Barbe V."/>
            <person name="Barnay S."/>
            <person name="Blanchin S."/>
            <person name="Beckerich J.-M."/>
            <person name="Beyne E."/>
            <person name="Bleykasten C."/>
            <person name="Boisrame A."/>
            <person name="Boyer J."/>
            <person name="Cattolico L."/>
            <person name="Confanioleri F."/>
            <person name="de Daruvar A."/>
            <person name="Despons L."/>
            <person name="Fabre E."/>
            <person name="Fairhead C."/>
            <person name="Ferry-Dumazet H."/>
            <person name="Groppi A."/>
            <person name="Hantraye F."/>
            <person name="Hennequin C."/>
            <person name="Jauniaux N."/>
            <person name="Joyet P."/>
            <person name="Kachouri R."/>
            <person name="Kerrest A."/>
            <person name="Koszul R."/>
            <person name="Lemaire M."/>
            <person name="Lesur I."/>
            <person name="Ma L."/>
            <person name="Muller H."/>
            <person name="Nicaud J.-M."/>
            <person name="Nikolski M."/>
            <person name="Oztas S."/>
            <person name="Ozier-Kalogeropoulos O."/>
            <person name="Pellenz S."/>
            <person name="Potier S."/>
            <person name="Richard G.-F."/>
            <person name="Straub M.-L."/>
            <person name="Suleau A."/>
            <person name="Swennen D."/>
            <person name="Tekaia F."/>
            <person name="Wesolowski-Louvel M."/>
            <person name="Westhof E."/>
            <person name="Wirth B."/>
            <person name="Zeniou-Meyer M."/>
            <person name="Zivanovic Y."/>
            <person name="Bolotin-Fukuhara M."/>
            <person name="Thierry A."/>
            <person name="Bouchier C."/>
            <person name="Caudron B."/>
            <person name="Scarpelli C."/>
            <person name="Gaillardin C."/>
            <person name="Weissenbach J."/>
            <person name="Wincker P."/>
            <person name="Souciet J.-L."/>
        </authorList>
    </citation>
    <scope>NUCLEOTIDE SEQUENCE [LARGE SCALE GENOMIC DNA]</scope>
    <source>
        <strain>CLIB 122 / E 150</strain>
    </source>
</reference>
<dbReference type="EC" id="3.4.21.-"/>
<dbReference type="EMBL" id="L16238">
    <property type="protein sequence ID" value="AAA20573.1"/>
    <property type="molecule type" value="Genomic_DNA"/>
</dbReference>
<dbReference type="EMBL" id="CR382132">
    <property type="protein sequence ID" value="CAG78169.1"/>
    <property type="molecule type" value="Genomic_DNA"/>
</dbReference>
<dbReference type="PIR" id="S40697">
    <property type="entry name" value="S40697"/>
</dbReference>
<dbReference type="RefSeq" id="XP_505362.1">
    <property type="nucleotide sequence ID" value="XM_505362.1"/>
</dbReference>
<dbReference type="SMR" id="P42781"/>
<dbReference type="FunCoup" id="P42781">
    <property type="interactions" value="168"/>
</dbReference>
<dbReference type="STRING" id="284591.P42781"/>
<dbReference type="GlyCosmos" id="P42781">
    <property type="glycosylation" value="6 sites, No reported glycans"/>
</dbReference>
<dbReference type="EnsemblFungi" id="CAG78169">
    <property type="protein sequence ID" value="CAG78169"/>
    <property type="gene ID" value="YALI0_F13189g"/>
</dbReference>
<dbReference type="KEGG" id="yli:2907885"/>
<dbReference type="VEuPathDB" id="FungiDB:YALI0_F13189g"/>
<dbReference type="HOGENOM" id="CLU_002976_2_1_1"/>
<dbReference type="InParanoid" id="P42781"/>
<dbReference type="OrthoDB" id="119512at4891"/>
<dbReference type="Proteomes" id="UP000001300">
    <property type="component" value="Chromosome F"/>
</dbReference>
<dbReference type="GO" id="GO:0000139">
    <property type="term" value="C:Golgi membrane"/>
    <property type="evidence" value="ECO:0000318"/>
    <property type="project" value="GO_Central"/>
</dbReference>
<dbReference type="GO" id="GO:0005802">
    <property type="term" value="C:trans-Golgi network"/>
    <property type="evidence" value="ECO:0000318"/>
    <property type="project" value="GO_Central"/>
</dbReference>
<dbReference type="GO" id="GO:0004252">
    <property type="term" value="F:serine-type endopeptidase activity"/>
    <property type="evidence" value="ECO:0000318"/>
    <property type="project" value="GO_Central"/>
</dbReference>
<dbReference type="GO" id="GO:0007323">
    <property type="term" value="P:peptide pheromone maturation"/>
    <property type="evidence" value="ECO:0007669"/>
    <property type="project" value="EnsemblFungi"/>
</dbReference>
<dbReference type="GO" id="GO:0016485">
    <property type="term" value="P:protein processing"/>
    <property type="evidence" value="ECO:0000318"/>
    <property type="project" value="GO_Central"/>
</dbReference>
<dbReference type="CDD" id="cd04059">
    <property type="entry name" value="Peptidases_S8_Protein_convertases_Kexins_Furin-like"/>
    <property type="match status" value="1"/>
</dbReference>
<dbReference type="FunFam" id="3.40.50.200:FF:000005">
    <property type="entry name" value="Proprotein convertase subtilisin/kexin type 7"/>
    <property type="match status" value="1"/>
</dbReference>
<dbReference type="FunFam" id="2.60.120.260:FF:000026">
    <property type="entry name" value="proprotein convertase subtilisin/kexin type 7"/>
    <property type="match status" value="1"/>
</dbReference>
<dbReference type="Gene3D" id="2.60.120.260">
    <property type="entry name" value="Galactose-binding domain-like"/>
    <property type="match status" value="1"/>
</dbReference>
<dbReference type="Gene3D" id="3.40.50.200">
    <property type="entry name" value="Peptidase S8/S53 domain"/>
    <property type="match status" value="1"/>
</dbReference>
<dbReference type="InterPro" id="IPR008979">
    <property type="entry name" value="Galactose-bd-like_sf"/>
</dbReference>
<dbReference type="InterPro" id="IPR034182">
    <property type="entry name" value="Kexin/furin"/>
</dbReference>
<dbReference type="InterPro" id="IPR002884">
    <property type="entry name" value="P_dom"/>
</dbReference>
<dbReference type="InterPro" id="IPR000209">
    <property type="entry name" value="Peptidase_S8/S53_dom"/>
</dbReference>
<dbReference type="InterPro" id="IPR036852">
    <property type="entry name" value="Peptidase_S8/S53_dom_sf"/>
</dbReference>
<dbReference type="InterPro" id="IPR023827">
    <property type="entry name" value="Peptidase_S8_Asp-AS"/>
</dbReference>
<dbReference type="InterPro" id="IPR022398">
    <property type="entry name" value="Peptidase_S8_His-AS"/>
</dbReference>
<dbReference type="InterPro" id="IPR023828">
    <property type="entry name" value="Peptidase_S8_Ser-AS"/>
</dbReference>
<dbReference type="InterPro" id="IPR015500">
    <property type="entry name" value="Peptidase_S8_subtilisin-rel"/>
</dbReference>
<dbReference type="PANTHER" id="PTHR42884:SF14">
    <property type="entry name" value="NEUROENDOCRINE CONVERTASE 1"/>
    <property type="match status" value="1"/>
</dbReference>
<dbReference type="PANTHER" id="PTHR42884">
    <property type="entry name" value="PROPROTEIN CONVERTASE SUBTILISIN/KEXIN-RELATED"/>
    <property type="match status" value="1"/>
</dbReference>
<dbReference type="Pfam" id="PF01483">
    <property type="entry name" value="P_proprotein"/>
    <property type="match status" value="1"/>
</dbReference>
<dbReference type="Pfam" id="PF00082">
    <property type="entry name" value="Peptidase_S8"/>
    <property type="match status" value="1"/>
</dbReference>
<dbReference type="PRINTS" id="PR00723">
    <property type="entry name" value="SUBTILISIN"/>
</dbReference>
<dbReference type="SUPFAM" id="SSF49785">
    <property type="entry name" value="Galactose-binding domain-like"/>
    <property type="match status" value="1"/>
</dbReference>
<dbReference type="SUPFAM" id="SSF52743">
    <property type="entry name" value="Subtilisin-like"/>
    <property type="match status" value="1"/>
</dbReference>
<dbReference type="PROSITE" id="PS51829">
    <property type="entry name" value="P_HOMO_B"/>
    <property type="match status" value="1"/>
</dbReference>
<dbReference type="PROSITE" id="PS51892">
    <property type="entry name" value="SUBTILASE"/>
    <property type="match status" value="1"/>
</dbReference>
<dbReference type="PROSITE" id="PS00136">
    <property type="entry name" value="SUBTILASE_ASP"/>
    <property type="match status" value="1"/>
</dbReference>
<dbReference type="PROSITE" id="PS00137">
    <property type="entry name" value="SUBTILASE_HIS"/>
    <property type="match status" value="1"/>
</dbReference>
<dbReference type="PROSITE" id="PS00138">
    <property type="entry name" value="SUBTILASE_SER"/>
    <property type="match status" value="1"/>
</dbReference>
<proteinExistence type="inferred from homology"/>
<organism>
    <name type="scientific">Yarrowia lipolytica (strain CLIB 122 / E 150)</name>
    <name type="common">Yeast</name>
    <name type="synonym">Candida lipolytica</name>
    <dbReference type="NCBI Taxonomy" id="284591"/>
    <lineage>
        <taxon>Eukaryota</taxon>
        <taxon>Fungi</taxon>
        <taxon>Dikarya</taxon>
        <taxon>Ascomycota</taxon>
        <taxon>Saccharomycotina</taxon>
        <taxon>Dipodascomycetes</taxon>
        <taxon>Dipodascales</taxon>
        <taxon>Dipodascales incertae sedis</taxon>
        <taxon>Yarrowia</taxon>
    </lineage>
</organism>
<protein>
    <recommendedName>
        <fullName>Dibasic-processing endoprotease</fullName>
        <ecNumber>3.4.21.-</ecNumber>
    </recommendedName>
</protein>
<gene>
    <name type="primary">XPR6</name>
    <name type="ordered locus">YALI0F13189g</name>
</gene>
<name>XPR6_YARLI</name>